<feature type="chain" id="PRO_0000146699" description="Nucleoside-triphosphatase THEP1">
    <location>
        <begin position="1"/>
        <end position="180"/>
    </location>
</feature>
<feature type="binding site" evidence="1">
    <location>
        <begin position="8"/>
        <end position="15"/>
    </location>
    <ligand>
        <name>ATP</name>
        <dbReference type="ChEBI" id="CHEBI:30616"/>
    </ligand>
</feature>
<feature type="binding site" evidence="1">
    <location>
        <begin position="100"/>
        <end position="107"/>
    </location>
    <ligand>
        <name>ATP</name>
        <dbReference type="ChEBI" id="CHEBI:30616"/>
    </ligand>
</feature>
<evidence type="ECO:0000255" key="1">
    <source>
        <dbReference type="HAMAP-Rule" id="MF_00796"/>
    </source>
</evidence>
<sequence length="180" mass="20202">MVKVGITGPVGSIKAEALAKIMEMLANEGKIIEGFLVSEKVEHNKLISYSVMDILSKKKAEFARQDIVSRVKIDKLGVDTRLLEDIVIPSLERAKSEADVIIIDELGKIENTTKNIKNIIEDVLKLDKTIIVTLHKKSRNPVLQEFRSLESVRVFDITPINKNILPFKILKVINGEEESI</sequence>
<proteinExistence type="inferred from homology"/>
<comment type="function">
    <text evidence="1">Has nucleotide phosphatase activity towards ATP, GTP, CTP, TTP and UTP. May hydrolyze nucleoside diphosphates with lower efficiency.</text>
</comment>
<comment type="catalytic activity">
    <reaction evidence="1">
        <text>a ribonucleoside 5'-triphosphate + H2O = a ribonucleoside 5'-diphosphate + phosphate + H(+)</text>
        <dbReference type="Rhea" id="RHEA:23680"/>
        <dbReference type="ChEBI" id="CHEBI:15377"/>
        <dbReference type="ChEBI" id="CHEBI:15378"/>
        <dbReference type="ChEBI" id="CHEBI:43474"/>
        <dbReference type="ChEBI" id="CHEBI:57930"/>
        <dbReference type="ChEBI" id="CHEBI:61557"/>
        <dbReference type="EC" id="3.6.1.15"/>
    </reaction>
</comment>
<comment type="similarity">
    <text evidence="1">Belongs to the THEP1 NTPase family.</text>
</comment>
<gene>
    <name type="ordered locus">PTO0219</name>
</gene>
<accession>Q6L2J8</accession>
<organism>
    <name type="scientific">Picrophilus torridus (strain ATCC 700027 / DSM 9790 / JCM 10055 / NBRC 100828 / KAW 2/3)</name>
    <dbReference type="NCBI Taxonomy" id="1122961"/>
    <lineage>
        <taxon>Archaea</taxon>
        <taxon>Methanobacteriati</taxon>
        <taxon>Thermoplasmatota</taxon>
        <taxon>Thermoplasmata</taxon>
        <taxon>Thermoplasmatales</taxon>
        <taxon>Picrophilaceae</taxon>
        <taxon>Picrophilus</taxon>
    </lineage>
</organism>
<keyword id="KW-0067">ATP-binding</keyword>
<keyword id="KW-0378">Hydrolase</keyword>
<keyword id="KW-0547">Nucleotide-binding</keyword>
<dbReference type="EC" id="3.6.1.15" evidence="1"/>
<dbReference type="EMBL" id="AE017261">
    <property type="protein sequence ID" value="AAT42804.1"/>
    <property type="molecule type" value="Genomic_DNA"/>
</dbReference>
<dbReference type="RefSeq" id="WP_011177020.1">
    <property type="nucleotide sequence ID" value="NC_005877.1"/>
</dbReference>
<dbReference type="SMR" id="Q6L2J8"/>
<dbReference type="FunCoup" id="Q6L2J8">
    <property type="interactions" value="100"/>
</dbReference>
<dbReference type="STRING" id="263820.PTO0219"/>
<dbReference type="PaxDb" id="263820-PTO0219"/>
<dbReference type="GeneID" id="2843980"/>
<dbReference type="KEGG" id="pto:PTO0219"/>
<dbReference type="eggNOG" id="arCOG01034">
    <property type="taxonomic scope" value="Archaea"/>
</dbReference>
<dbReference type="HOGENOM" id="CLU_103145_1_1_2"/>
<dbReference type="InParanoid" id="Q6L2J8"/>
<dbReference type="OrthoDB" id="52698at2157"/>
<dbReference type="Proteomes" id="UP000000438">
    <property type="component" value="Chromosome"/>
</dbReference>
<dbReference type="GO" id="GO:0005524">
    <property type="term" value="F:ATP binding"/>
    <property type="evidence" value="ECO:0007669"/>
    <property type="project" value="UniProtKB-UniRule"/>
</dbReference>
<dbReference type="GO" id="GO:0017111">
    <property type="term" value="F:ribonucleoside triphosphate phosphatase activity"/>
    <property type="evidence" value="ECO:0007669"/>
    <property type="project" value="UniProtKB-UniRule"/>
</dbReference>
<dbReference type="CDD" id="cd19482">
    <property type="entry name" value="RecA-like_Thep1"/>
    <property type="match status" value="1"/>
</dbReference>
<dbReference type="Gene3D" id="3.40.50.300">
    <property type="entry name" value="P-loop containing nucleotide triphosphate hydrolases"/>
    <property type="match status" value="1"/>
</dbReference>
<dbReference type="HAMAP" id="MF_00796">
    <property type="entry name" value="NTPase_1"/>
    <property type="match status" value="1"/>
</dbReference>
<dbReference type="InterPro" id="IPR004948">
    <property type="entry name" value="Nuc-triphosphatase_THEP1"/>
</dbReference>
<dbReference type="InterPro" id="IPR027417">
    <property type="entry name" value="P-loop_NTPase"/>
</dbReference>
<dbReference type="NCBIfam" id="NF010248">
    <property type="entry name" value="PRK13695.1"/>
    <property type="match status" value="1"/>
</dbReference>
<dbReference type="PANTHER" id="PTHR43146">
    <property type="entry name" value="CANCER-RELATED NUCLEOSIDE-TRIPHOSPHATASE"/>
    <property type="match status" value="1"/>
</dbReference>
<dbReference type="PANTHER" id="PTHR43146:SF1">
    <property type="entry name" value="CANCER-RELATED NUCLEOSIDE-TRIPHOSPHATASE"/>
    <property type="match status" value="1"/>
</dbReference>
<dbReference type="Pfam" id="PF03266">
    <property type="entry name" value="NTPase_1"/>
    <property type="match status" value="1"/>
</dbReference>
<dbReference type="SUPFAM" id="SSF52540">
    <property type="entry name" value="P-loop containing nucleoside triphosphate hydrolases"/>
    <property type="match status" value="1"/>
</dbReference>
<name>NTPTH_PICTO</name>
<reference key="1">
    <citation type="journal article" date="2004" name="Proc. Natl. Acad. Sci. U.S.A.">
        <title>Genome sequence of Picrophilus torridus and its implications for life around pH 0.</title>
        <authorList>
            <person name="Fuetterer O."/>
            <person name="Angelov A."/>
            <person name="Liesegang H."/>
            <person name="Gottschalk G."/>
            <person name="Schleper C."/>
            <person name="Schepers B."/>
            <person name="Dock C."/>
            <person name="Antranikian G."/>
            <person name="Liebl W."/>
        </authorList>
    </citation>
    <scope>NUCLEOTIDE SEQUENCE [LARGE SCALE GENOMIC DNA]</scope>
    <source>
        <strain>ATCC 700027 / DSM 9790 / JCM 10055 / NBRC 100828 / KAW 2/3</strain>
    </source>
</reference>
<protein>
    <recommendedName>
        <fullName evidence="1">Nucleoside-triphosphatase THEP1</fullName>
        <shortName evidence="1">NTPase THEP1</shortName>
        <ecNumber evidence="1">3.6.1.15</ecNumber>
    </recommendedName>
    <alternativeName>
        <fullName evidence="1">Nucleoside triphosphate phosphohydrolase</fullName>
    </alternativeName>
</protein>